<accession>A0A0F7TXA1</accession>
<dbReference type="EC" id="2.5.1.-" evidence="7"/>
<dbReference type="EMBL" id="CDHK01000010">
    <property type="protein sequence ID" value="CEJ61313.1"/>
    <property type="molecule type" value="Genomic_DNA"/>
</dbReference>
<dbReference type="SMR" id="A0A0F7TXA1"/>
<dbReference type="STRING" id="104259.A0A0F7TXA1"/>
<dbReference type="OrthoDB" id="18170at2759"/>
<dbReference type="UniPathway" id="UPA00213"/>
<dbReference type="Proteomes" id="UP000042958">
    <property type="component" value="Unassembled WGS sequence"/>
</dbReference>
<dbReference type="GO" id="GO:0005743">
    <property type="term" value="C:mitochondrial inner membrane"/>
    <property type="evidence" value="ECO:0007669"/>
    <property type="project" value="TreeGrafter"/>
</dbReference>
<dbReference type="GO" id="GO:0008412">
    <property type="term" value="F:4-hydroxybenzoate polyprenyltransferase activity"/>
    <property type="evidence" value="ECO:0007669"/>
    <property type="project" value="TreeGrafter"/>
</dbReference>
<dbReference type="GO" id="GO:0016114">
    <property type="term" value="P:terpenoid biosynthetic process"/>
    <property type="evidence" value="ECO:0007669"/>
    <property type="project" value="UniProtKB-UniPathway"/>
</dbReference>
<dbReference type="GO" id="GO:0006744">
    <property type="term" value="P:ubiquinone biosynthetic process"/>
    <property type="evidence" value="ECO:0007669"/>
    <property type="project" value="TreeGrafter"/>
</dbReference>
<dbReference type="CDD" id="cd13959">
    <property type="entry name" value="PT_UbiA_COQ2"/>
    <property type="match status" value="1"/>
</dbReference>
<dbReference type="FunFam" id="1.10.357.140:FF:000008">
    <property type="entry name" value="4-hydroxybenzoate octaprenyltransferase"/>
    <property type="match status" value="1"/>
</dbReference>
<dbReference type="Gene3D" id="1.10.357.140">
    <property type="entry name" value="UbiA prenyltransferase"/>
    <property type="match status" value="1"/>
</dbReference>
<dbReference type="Gene3D" id="1.20.120.1780">
    <property type="entry name" value="UbiA prenyltransferase"/>
    <property type="match status" value="1"/>
</dbReference>
<dbReference type="InterPro" id="IPR039653">
    <property type="entry name" value="Prenyltransferase"/>
</dbReference>
<dbReference type="InterPro" id="IPR000537">
    <property type="entry name" value="UbiA_prenyltransferase"/>
</dbReference>
<dbReference type="InterPro" id="IPR030470">
    <property type="entry name" value="UbiA_prenylTrfase_CS"/>
</dbReference>
<dbReference type="InterPro" id="IPR044878">
    <property type="entry name" value="UbiA_sf"/>
</dbReference>
<dbReference type="PANTHER" id="PTHR11048:SF39">
    <property type="entry name" value="POLYPRENYL TRANSFERASE AUSN"/>
    <property type="match status" value="1"/>
</dbReference>
<dbReference type="PANTHER" id="PTHR11048">
    <property type="entry name" value="PRENYLTRANSFERASES"/>
    <property type="match status" value="1"/>
</dbReference>
<dbReference type="Pfam" id="PF01040">
    <property type="entry name" value="UbiA"/>
    <property type="match status" value="1"/>
</dbReference>
<dbReference type="PROSITE" id="PS00943">
    <property type="entry name" value="UBIA"/>
    <property type="match status" value="1"/>
</dbReference>
<proteinExistence type="inferred from homology"/>
<keyword id="KW-0460">Magnesium</keyword>
<keyword id="KW-0472">Membrane</keyword>
<keyword id="KW-1185">Reference proteome</keyword>
<keyword id="KW-0808">Transferase</keyword>
<keyword id="KW-0812">Transmembrane</keyword>
<keyword id="KW-1133">Transmembrane helix</keyword>
<evidence type="ECO:0000250" key="1">
    <source>
        <dbReference type="UniProtKB" id="P32378"/>
    </source>
</evidence>
<evidence type="ECO:0000250" key="2">
    <source>
        <dbReference type="UniProtKB" id="Q5AR21"/>
    </source>
</evidence>
<evidence type="ECO:0000255" key="3"/>
<evidence type="ECO:0000269" key="4">
    <source>
    </source>
</evidence>
<evidence type="ECO:0000303" key="5">
    <source>
    </source>
</evidence>
<evidence type="ECO:0000305" key="6"/>
<evidence type="ECO:0000305" key="7">
    <source>
    </source>
</evidence>
<feature type="chain" id="PRO_0000453861" description="Polyprenyl transferase ausN">
    <location>
        <begin position="1"/>
        <end position="316"/>
    </location>
</feature>
<feature type="transmembrane region" description="Helical" evidence="3">
    <location>
        <begin position="45"/>
        <end position="65"/>
    </location>
</feature>
<feature type="transmembrane region" description="Helical" evidence="3">
    <location>
        <begin position="69"/>
        <end position="89"/>
    </location>
</feature>
<feature type="transmembrane region" description="Helical" evidence="3">
    <location>
        <begin position="108"/>
        <end position="128"/>
    </location>
</feature>
<feature type="transmembrane region" description="Helical" evidence="3">
    <location>
        <begin position="129"/>
        <end position="149"/>
    </location>
</feature>
<feature type="transmembrane region" description="Helical" evidence="3">
    <location>
        <begin position="163"/>
        <end position="183"/>
    </location>
</feature>
<feature type="transmembrane region" description="Helical" evidence="3">
    <location>
        <begin position="188"/>
        <end position="208"/>
    </location>
</feature>
<feature type="transmembrane region" description="Helical" evidence="3">
    <location>
        <begin position="233"/>
        <end position="253"/>
    </location>
</feature>
<feature type="transmembrane region" description="Helical" evidence="3">
    <location>
        <begin position="256"/>
        <end position="276"/>
    </location>
</feature>
<feature type="transmembrane region" description="Helical" evidence="3">
    <location>
        <begin position="296"/>
        <end position="316"/>
    </location>
</feature>
<comment type="function">
    <text evidence="2 4">Polyprenyl transferase; part of the gene cluster A that mediates the biosynthesis of the fungal meroterpenoid acetoxydehydroaustin (PubMed:29076725). The first step of the pathway is the synthesis of 3,5-dimethylorsellinic acid by the polyketide synthase ausA (By similarity). 3,5-dimethylorsellinic acid is then prenylated by the polyprenyl transferase ausN (By similarity). Further epoxidation by the FAD-dependent monooxygenase ausM and cyclization by the probable terpene cyclase ausL lead to the formation of protoaustinoid A (By similarity). Protoaustinoid A is then oxidized to spiro-lactone preaustinoid A3 by the combined action of the FAD-binding monooxygenases ausB and ausC, and the dioxygenase ausE (By similarity). Acid-catalyzed keto-rearrangement and ring contraction of the tetraketide portion of preaustinoid A3 by ausJ lead to the formation of preaustinoid A4 (By similarity). The aldo-keto reductase ausK, with the help of ausH, is involved in the next step by transforming preaustinoid A4 into isoaustinone which is in turn hydroxylated by the P450 monooxygenase ausI to form austinolide (By similarity). The cytochrome P450 monooxygenase ausG then modifies austinolide to austinol (By similarity). Austinol is further acetylated to austin by the O-acetyltransferase ausP, which spontaneously changes to dehydroaustin (PubMed:29076725). The cytochrome P450 monooxygenase then converts dehydroaustin is into 7-dehydrodehydroaustin (PubMed:29076725). The hydroxylation catalyzed by ausR permits the second O-acetyltransferase ausQ to add an additional acetyl group to the molecule, leading to the formation of acetoxydehydroaustin (PubMed:29076725). Due to genetic rearrangements of the clusters and the subsequent loss of some enzymes, the end product of the Penicillium brasilianum austinoid biosynthesis clusters is acetoxydehydroaustin (PubMed:29076725).</text>
</comment>
<comment type="catalytic activity">
    <reaction evidence="2">
        <text>3,5-dimethylorsellinate + (2E,6E)-farnesyl diphosphate = (3R)-3-farnesyl-6-hydroxy-2,3,5-trimethyl-4-oxocyclohexa-1,5-diene-1-carboxylate + diphosphate + H(+)</text>
        <dbReference type="Rhea" id="RHEA:49632"/>
        <dbReference type="ChEBI" id="CHEBI:15378"/>
        <dbReference type="ChEBI" id="CHEBI:33019"/>
        <dbReference type="ChEBI" id="CHEBI:131856"/>
        <dbReference type="ChEBI" id="CHEBI:131857"/>
        <dbReference type="ChEBI" id="CHEBI:175763"/>
    </reaction>
    <physiologicalReaction direction="left-to-right" evidence="2">
        <dbReference type="Rhea" id="RHEA:49633"/>
    </physiologicalReaction>
</comment>
<comment type="cofactor">
    <cofactor evidence="1">
        <name>Mg(2+)</name>
        <dbReference type="ChEBI" id="CHEBI:18420"/>
    </cofactor>
</comment>
<comment type="pathway">
    <text evidence="7">Secondary metabolite biosynthesis; terpenoid biosynthesis.</text>
</comment>
<comment type="subcellular location">
    <subcellularLocation>
        <location evidence="3">Membrane</location>
        <topology evidence="3">Multi-pass membrane protein</topology>
    </subcellularLocation>
</comment>
<comment type="miscellaneous">
    <text evidence="7">In A.calidoustus, the austinoid gene cluster lies on a contiguous DNA region, while clusters from E.nidulans and P.brasilianum are split in their respective genomes. Genetic rearrangements provoked variability among the clusters and E.nidulans produces the least number of austionoid derivatives with the end products austinol and dehydroaustinol, while P.brasilianum can produce until acetoxydehydroaustin, and A.calidoustus produces the highest number of identified derivatives.</text>
</comment>
<comment type="similarity">
    <text evidence="6">Belongs to the UbiA prenyltransferase family.</text>
</comment>
<name>AUSN_PENBI</name>
<sequence length="316" mass="34361">MPTKGDYQPPKNGILSKLPESTVPYGELLRIHRPLGYYLNISPYVVGVAYTAAISPVTLPATFLLGRLVILSLWGFCIRSAGCAWNDLIDMDIDRQVSRTKLRPLPRGAVSPSGAALLTAFMFGCGGSLLLLLPSQCAFEAAIVVFFALLYPFGKRFSDHPQLILTNIAWAIPMAMSSLDMNPLDFPIPTLAMSFSIASVIVMIDIVYACQDAEEDKKVGARSMAVRYMEITDQIAYSLFFSGTLSLLAGGILRGLGIPFLIFSVGGHFVGFLRFLRASLGNGAKSALVESRAKSSCLLATVFLVFGLFFEYCVRL</sequence>
<organism>
    <name type="scientific">Penicillium brasilianum</name>
    <dbReference type="NCBI Taxonomy" id="104259"/>
    <lineage>
        <taxon>Eukaryota</taxon>
        <taxon>Fungi</taxon>
        <taxon>Dikarya</taxon>
        <taxon>Ascomycota</taxon>
        <taxon>Pezizomycotina</taxon>
        <taxon>Eurotiomycetes</taxon>
        <taxon>Eurotiomycetidae</taxon>
        <taxon>Eurotiales</taxon>
        <taxon>Aspergillaceae</taxon>
        <taxon>Penicillium</taxon>
    </lineage>
</organism>
<reference key="1">
    <citation type="journal article" date="2015" name="Genome Announc.">
        <title>Draft genome sequence of the fungus Penicillium brasilianum MG11.</title>
        <authorList>
            <person name="Horn F."/>
            <person name="Linde J."/>
            <person name="Mattern D.J."/>
            <person name="Walther G."/>
            <person name="Guthke R."/>
            <person name="Brakhage A.A."/>
            <person name="Valiante V."/>
        </authorList>
    </citation>
    <scope>NUCLEOTIDE SEQUENCE [LARGE SCALE GENOMIC DNA]</scope>
    <source>
        <strain>MG11</strain>
    </source>
</reference>
<reference key="2">
    <citation type="journal article" date="2016" name="J. Am. Chem. Soc.">
        <title>Discovery of key dioxygenases that diverged the paraherquonin and acetoxydehydroaustin pathways in Penicillium brasilianum.</title>
        <authorList>
            <person name="Matsuda Y."/>
            <person name="Iwabuchi T."/>
            <person name="Fujimoto T."/>
            <person name="Awakawa T."/>
            <person name="Nakashima Y."/>
            <person name="Mori T."/>
            <person name="Zhang H."/>
            <person name="Hayashi F."/>
            <person name="Abe I."/>
        </authorList>
    </citation>
    <scope>FUNCTION</scope>
</reference>
<reference key="3">
    <citation type="journal article" date="2017" name="ACS Chem. Biol.">
        <title>Rewiring of the austinoid biosynthetic pathway in filamentous fungi.</title>
        <authorList>
            <person name="Mattern D.J."/>
            <person name="Valiante V."/>
            <person name="Horn F."/>
            <person name="Petzke L."/>
            <person name="Brakhage A.A."/>
        </authorList>
    </citation>
    <scope>FUNCTION</scope>
</reference>
<protein>
    <recommendedName>
        <fullName evidence="5">Polyprenyl transferase ausN</fullName>
        <ecNumber evidence="7">2.5.1.-</ecNumber>
    </recommendedName>
    <alternativeName>
        <fullName evidence="5">Austinoid biosynthesis clusters protein N</fullName>
    </alternativeName>
</protein>
<gene>
    <name evidence="5" type="primary">ausN</name>
    <name type="ORF">PMG11_09849</name>
</gene>